<accession>E3XA68</accession>
<accession>W5JRM0</accession>
<feature type="chain" id="PRO_0000416316" description="NAD(P)H-hydrate epimerase">
    <location>
        <begin position="1"/>
        <end position="228"/>
    </location>
</feature>
<feature type="domain" description="YjeF N-terminal" evidence="1">
    <location>
        <begin position="9"/>
        <end position="215"/>
    </location>
</feature>
<feature type="binding site" evidence="1">
    <location>
        <begin position="58"/>
        <end position="62"/>
    </location>
    <ligand>
        <name>(6S)-NADPHX</name>
        <dbReference type="ChEBI" id="CHEBI:64076"/>
    </ligand>
</feature>
<feature type="binding site" evidence="1">
    <location>
        <position position="59"/>
    </location>
    <ligand>
        <name>K(+)</name>
        <dbReference type="ChEBI" id="CHEBI:29103"/>
    </ligand>
</feature>
<feature type="binding site" evidence="1">
    <location>
        <position position="123"/>
    </location>
    <ligand>
        <name>K(+)</name>
        <dbReference type="ChEBI" id="CHEBI:29103"/>
    </ligand>
</feature>
<feature type="binding site" evidence="1">
    <location>
        <begin position="127"/>
        <end position="133"/>
    </location>
    <ligand>
        <name>(6S)-NADPHX</name>
        <dbReference type="ChEBI" id="CHEBI:64076"/>
    </ligand>
</feature>
<feature type="binding site" evidence="1">
    <location>
        <position position="156"/>
    </location>
    <ligand>
        <name>(6S)-NADPHX</name>
        <dbReference type="ChEBI" id="CHEBI:64076"/>
    </ligand>
</feature>
<feature type="binding site" evidence="1">
    <location>
        <position position="159"/>
    </location>
    <ligand>
        <name>K(+)</name>
        <dbReference type="ChEBI" id="CHEBI:29103"/>
    </ligand>
</feature>
<sequence length="228" mass="25436">MKYLNQQEAISIDEELFNEYKFSVDQLMELAGLSCAHVIADAYAPESNKILICCGPGNNGGDGLVAARHLALMNYNPYVYYPKRTEKELFRNLQHQAESMGITVTTDCPDGASVEQEFGLIVDALFGFSFKPPVRDSFLPIMNVLQRSKLPIVSIDIPSGWNVEEGPQNECDIQPACLISLTAPKLCAKRLLNAQHYLGGRFVPKRLEEKYSLELPSYLGSNLFVKLN</sequence>
<organism>
    <name type="scientific">Anopheles darlingi</name>
    <name type="common">Mosquito</name>
    <dbReference type="NCBI Taxonomy" id="43151"/>
    <lineage>
        <taxon>Eukaryota</taxon>
        <taxon>Metazoa</taxon>
        <taxon>Ecdysozoa</taxon>
        <taxon>Arthropoda</taxon>
        <taxon>Hexapoda</taxon>
        <taxon>Insecta</taxon>
        <taxon>Pterygota</taxon>
        <taxon>Neoptera</taxon>
        <taxon>Endopterygota</taxon>
        <taxon>Diptera</taxon>
        <taxon>Nematocera</taxon>
        <taxon>Culicoidea</taxon>
        <taxon>Culicidae</taxon>
        <taxon>Anophelinae</taxon>
        <taxon>Anopheles</taxon>
    </lineage>
</organism>
<keyword id="KW-0413">Isomerase</keyword>
<keyword id="KW-0479">Metal-binding</keyword>
<keyword id="KW-0520">NAD</keyword>
<keyword id="KW-0521">NADP</keyword>
<keyword id="KW-0547">Nucleotide-binding</keyword>
<keyword id="KW-0630">Potassium</keyword>
<keyword id="KW-1185">Reference proteome</keyword>
<reference key="1">
    <citation type="journal article" date="2010" name="BMC Genomics">
        <title>Combination of measures distinguishes pre-miRNAs from other stem-loops in the genome of the newly sequenced Anopheles darlingi.</title>
        <authorList>
            <person name="Mendes N.D."/>
            <person name="Freitas A.T."/>
            <person name="Vasconcelos A.T."/>
            <person name="Sagot M.F."/>
        </authorList>
    </citation>
    <scope>NUCLEOTIDE SEQUENCE [LARGE SCALE GENOMIC DNA]</scope>
</reference>
<proteinExistence type="inferred from homology"/>
<evidence type="ECO:0000255" key="1">
    <source>
        <dbReference type="HAMAP-Rule" id="MF_03159"/>
    </source>
</evidence>
<evidence type="ECO:0000305" key="2"/>
<evidence type="ECO:0000312" key="3">
    <source>
        <dbReference type="EMBL" id="ETN67052.1"/>
    </source>
</evidence>
<dbReference type="EC" id="5.1.99.6"/>
<dbReference type="EMBL" id="ADMH02000300">
    <property type="protein sequence ID" value="ETN67052.1"/>
    <property type="status" value="ALT_SEQ"/>
    <property type="molecule type" value="Genomic_DNA"/>
</dbReference>
<dbReference type="SMR" id="E3XA68"/>
<dbReference type="FunCoup" id="E3XA68">
    <property type="interactions" value="1218"/>
</dbReference>
<dbReference type="STRING" id="43151.E3XA68"/>
<dbReference type="VEuPathDB" id="VectorBase:ADAC001150"/>
<dbReference type="VEuPathDB" id="VectorBase:ADAR2_003494"/>
<dbReference type="eggNOG" id="KOG2585">
    <property type="taxonomic scope" value="Eukaryota"/>
</dbReference>
<dbReference type="InParanoid" id="E3XA68"/>
<dbReference type="Proteomes" id="UP000000673">
    <property type="component" value="Unassembled WGS sequence"/>
</dbReference>
<dbReference type="GO" id="GO:0005739">
    <property type="term" value="C:mitochondrion"/>
    <property type="evidence" value="ECO:0007669"/>
    <property type="project" value="TreeGrafter"/>
</dbReference>
<dbReference type="GO" id="GO:0046872">
    <property type="term" value="F:metal ion binding"/>
    <property type="evidence" value="ECO:0007669"/>
    <property type="project" value="UniProtKB-KW"/>
</dbReference>
<dbReference type="GO" id="GO:0052856">
    <property type="term" value="F:NAD(P)HX epimerase activity"/>
    <property type="evidence" value="ECO:0007669"/>
    <property type="project" value="UniProtKB-UniRule"/>
</dbReference>
<dbReference type="GO" id="GO:0000166">
    <property type="term" value="F:nucleotide binding"/>
    <property type="evidence" value="ECO:0007669"/>
    <property type="project" value="UniProtKB-KW"/>
</dbReference>
<dbReference type="Gene3D" id="3.40.50.10260">
    <property type="entry name" value="YjeF N-terminal domain"/>
    <property type="match status" value="1"/>
</dbReference>
<dbReference type="HAMAP" id="MF_01966">
    <property type="entry name" value="NADHX_epimerase"/>
    <property type="match status" value="1"/>
</dbReference>
<dbReference type="InterPro" id="IPR004443">
    <property type="entry name" value="YjeF_N_dom"/>
</dbReference>
<dbReference type="InterPro" id="IPR036652">
    <property type="entry name" value="YjeF_N_dom_sf"/>
</dbReference>
<dbReference type="InterPro" id="IPR032976">
    <property type="entry name" value="YJEFN_prot_NAXE-like"/>
</dbReference>
<dbReference type="NCBIfam" id="TIGR00197">
    <property type="entry name" value="yjeF_nterm"/>
    <property type="match status" value="1"/>
</dbReference>
<dbReference type="PANTHER" id="PTHR13232">
    <property type="entry name" value="NAD(P)H-HYDRATE EPIMERASE"/>
    <property type="match status" value="1"/>
</dbReference>
<dbReference type="PANTHER" id="PTHR13232:SF10">
    <property type="entry name" value="NAD(P)H-HYDRATE EPIMERASE"/>
    <property type="match status" value="1"/>
</dbReference>
<dbReference type="Pfam" id="PF03853">
    <property type="entry name" value="YjeF_N"/>
    <property type="match status" value="1"/>
</dbReference>
<dbReference type="SUPFAM" id="SSF64153">
    <property type="entry name" value="YjeF N-terminal domain-like"/>
    <property type="match status" value="1"/>
</dbReference>
<dbReference type="PROSITE" id="PS51385">
    <property type="entry name" value="YJEF_N"/>
    <property type="match status" value="1"/>
</dbReference>
<comment type="function">
    <text evidence="1">Catalyzes the epimerization of the S- and R-forms of NAD(P)HX, a damaged form of NAD(P)H that is a result of enzymatic or heat-dependent hydration. This is a prerequisite for the S-specific NAD(P)H-hydrate dehydratase to allow the repair of both epimers of NAD(P)HX.</text>
</comment>
<comment type="catalytic activity">
    <reaction>
        <text>(6R)-NADHX = (6S)-NADHX</text>
        <dbReference type="Rhea" id="RHEA:32215"/>
        <dbReference type="ChEBI" id="CHEBI:64074"/>
        <dbReference type="ChEBI" id="CHEBI:64075"/>
        <dbReference type="EC" id="5.1.99.6"/>
    </reaction>
</comment>
<comment type="catalytic activity">
    <reaction>
        <text>(6R)-NADPHX = (6S)-NADPHX</text>
        <dbReference type="Rhea" id="RHEA:32227"/>
        <dbReference type="ChEBI" id="CHEBI:64076"/>
        <dbReference type="ChEBI" id="CHEBI:64077"/>
        <dbReference type="EC" id="5.1.99.6"/>
    </reaction>
</comment>
<comment type="cofactor">
    <cofactor evidence="1">
        <name>K(+)</name>
        <dbReference type="ChEBI" id="CHEBI:29103"/>
    </cofactor>
    <text evidence="1">Binds 1 potassium ion per subunit.</text>
</comment>
<comment type="similarity">
    <text evidence="1">Belongs to the NnrE/AIBP family.</text>
</comment>
<comment type="sequence caution" evidence="2">
    <conflict type="erroneous gene model prediction">
        <sequence resource="EMBL-CDS" id="ETN67052"/>
    </conflict>
</comment>
<protein>
    <recommendedName>
        <fullName evidence="1">NAD(P)H-hydrate epimerase</fullName>
        <ecNumber>5.1.99.6</ecNumber>
    </recommendedName>
    <alternativeName>
        <fullName evidence="1">NAD(P)HX epimerase</fullName>
    </alternativeName>
</protein>
<gene>
    <name evidence="3" type="ORF">AND_001150</name>
</gene>
<name>NNRE_ANODA</name>